<accession>Q5XE04</accession>
<name>HASC1_STRP6</name>
<protein>
    <recommendedName>
        <fullName>UTP--glucose-1-phosphate uridylyltransferase 1</fullName>
        <ecNumber>2.7.7.9</ecNumber>
    </recommendedName>
    <alternativeName>
        <fullName>Alpha-D-glucosyl-1-phosphate uridylyltransferase 1</fullName>
    </alternativeName>
    <alternativeName>
        <fullName>UDP-glucose pyrophosphorylase 1</fullName>
        <shortName>UDPGP 1</shortName>
    </alternativeName>
    <alternativeName>
        <fullName>Uridine diphosphoglucose pyrophosphorylase 1</fullName>
    </alternativeName>
</protein>
<proteinExistence type="inferred from homology"/>
<evidence type="ECO:0000305" key="1"/>
<feature type="chain" id="PRO_0000201370" description="UTP--glucose-1-phosphate uridylyltransferase 1">
    <location>
        <begin position="1"/>
        <end position="299"/>
    </location>
</feature>
<gene>
    <name type="primary">hasC1</name>
    <name type="synonym">hasC</name>
    <name type="ordered locus">M6_Spy0224</name>
</gene>
<keyword id="KW-0548">Nucleotidyltransferase</keyword>
<keyword id="KW-0808">Transferase</keyword>
<organism>
    <name type="scientific">Streptococcus pyogenes serotype M6 (strain ATCC BAA-946 / MGAS10394)</name>
    <dbReference type="NCBI Taxonomy" id="286636"/>
    <lineage>
        <taxon>Bacteria</taxon>
        <taxon>Bacillati</taxon>
        <taxon>Bacillota</taxon>
        <taxon>Bacilli</taxon>
        <taxon>Lactobacillales</taxon>
        <taxon>Streptococcaceae</taxon>
        <taxon>Streptococcus</taxon>
    </lineage>
</organism>
<reference key="1">
    <citation type="journal article" date="2004" name="J. Infect. Dis.">
        <title>Progress toward characterization of the group A Streptococcus metagenome: complete genome sequence of a macrolide-resistant serotype M6 strain.</title>
        <authorList>
            <person name="Banks D.J."/>
            <person name="Porcella S.F."/>
            <person name="Barbian K.D."/>
            <person name="Beres S.B."/>
            <person name="Philips L.E."/>
            <person name="Voyich J.M."/>
            <person name="DeLeo F.R."/>
            <person name="Martin J.M."/>
            <person name="Somerville G.A."/>
            <person name="Musser J.M."/>
        </authorList>
    </citation>
    <scope>NUCLEOTIDE SEQUENCE [LARGE SCALE GENOMIC DNA]</scope>
    <source>
        <strain>ATCC BAA-946 / MGAS10394</strain>
    </source>
</reference>
<comment type="catalytic activity">
    <reaction>
        <text>alpha-D-glucose 1-phosphate + UTP + H(+) = UDP-alpha-D-glucose + diphosphate</text>
        <dbReference type="Rhea" id="RHEA:19889"/>
        <dbReference type="ChEBI" id="CHEBI:15378"/>
        <dbReference type="ChEBI" id="CHEBI:33019"/>
        <dbReference type="ChEBI" id="CHEBI:46398"/>
        <dbReference type="ChEBI" id="CHEBI:58601"/>
        <dbReference type="ChEBI" id="CHEBI:58885"/>
        <dbReference type="EC" id="2.7.7.9"/>
    </reaction>
</comment>
<comment type="pathway">
    <text>Carbohydrate metabolism; nucleotide-sugar metabolism.</text>
</comment>
<comment type="similarity">
    <text evidence="1">Belongs to the UDPGP type 2 family.</text>
</comment>
<comment type="sequence caution" evidence="1">
    <conflict type="erroneous initiation">
        <sequence resource="EMBL-CDS" id="AAT86359"/>
    </conflict>
</comment>
<sequence length="299" mass="33302">MTKVRKAIIPAAGLGTRFLPATKALAKEMLPIVDKPTIQFIVEEALKSGIEEILIVTGKSKRSIEDHFDSNFELEYNLQAKGKIELLKLVDETTSINLHFIRQSHPRGLGDAVLQAKTFVGNEPFVVMLGDDLMDITNPNVKPLTKQLIDDYEETHAATIAVMRVPHEDVSNYGIIAPQAKAVKGLYSVDTFVEKPQPQDAPSDLAIIGRYLLTPEIFSILEKQEPGAGNEVQLTDAIDTLNKTQRVFAREFKGKRYDVGDKFGFMKTSLDYALKHPQVKDDLKAYIIQLGKALEKTKP</sequence>
<dbReference type="EC" id="2.7.7.9"/>
<dbReference type="EMBL" id="CP000003">
    <property type="protein sequence ID" value="AAT86359.1"/>
    <property type="status" value="ALT_INIT"/>
    <property type="molecule type" value="Genomic_DNA"/>
</dbReference>
<dbReference type="SMR" id="Q5XE04"/>
<dbReference type="KEGG" id="spa:M6_Spy0224"/>
<dbReference type="HOGENOM" id="CLU_029499_1_2_9"/>
<dbReference type="UniPathway" id="UPA00215"/>
<dbReference type="Proteomes" id="UP000001167">
    <property type="component" value="Chromosome"/>
</dbReference>
<dbReference type="GO" id="GO:0003983">
    <property type="term" value="F:UTP:glucose-1-phosphate uridylyltransferase activity"/>
    <property type="evidence" value="ECO:0007669"/>
    <property type="project" value="UniProtKB-EC"/>
</dbReference>
<dbReference type="GO" id="GO:0009058">
    <property type="term" value="P:biosynthetic process"/>
    <property type="evidence" value="ECO:0007669"/>
    <property type="project" value="InterPro"/>
</dbReference>
<dbReference type="GO" id="GO:0006011">
    <property type="term" value="P:UDP-alpha-D-glucose metabolic process"/>
    <property type="evidence" value="ECO:0007669"/>
    <property type="project" value="InterPro"/>
</dbReference>
<dbReference type="CDD" id="cd02541">
    <property type="entry name" value="UGPase_prokaryotic"/>
    <property type="match status" value="1"/>
</dbReference>
<dbReference type="Gene3D" id="3.90.550.10">
    <property type="entry name" value="Spore Coat Polysaccharide Biosynthesis Protein SpsA, Chain A"/>
    <property type="match status" value="1"/>
</dbReference>
<dbReference type="InterPro" id="IPR005771">
    <property type="entry name" value="GalU_uridylyltTrfase_bac/arc"/>
</dbReference>
<dbReference type="InterPro" id="IPR005835">
    <property type="entry name" value="NTP_transferase_dom"/>
</dbReference>
<dbReference type="InterPro" id="IPR029044">
    <property type="entry name" value="Nucleotide-diphossugar_trans"/>
</dbReference>
<dbReference type="NCBIfam" id="TIGR01099">
    <property type="entry name" value="galU"/>
    <property type="match status" value="1"/>
</dbReference>
<dbReference type="PANTHER" id="PTHR43197">
    <property type="entry name" value="UTP--GLUCOSE-1-PHOSPHATE URIDYLYLTRANSFERASE"/>
    <property type="match status" value="1"/>
</dbReference>
<dbReference type="PANTHER" id="PTHR43197:SF1">
    <property type="entry name" value="UTP--GLUCOSE-1-PHOSPHATE URIDYLYLTRANSFERASE"/>
    <property type="match status" value="1"/>
</dbReference>
<dbReference type="Pfam" id="PF00483">
    <property type="entry name" value="NTP_transferase"/>
    <property type="match status" value="1"/>
</dbReference>
<dbReference type="SUPFAM" id="SSF53448">
    <property type="entry name" value="Nucleotide-diphospho-sugar transferases"/>
    <property type="match status" value="1"/>
</dbReference>